<gene>
    <name type="primary">SWC4</name>
    <name type="ordered locus">YALI0D09911g</name>
</gene>
<accession>Q6C9M6</accession>
<organism>
    <name type="scientific">Yarrowia lipolytica (strain CLIB 122 / E 150)</name>
    <name type="common">Yeast</name>
    <name type="synonym">Candida lipolytica</name>
    <dbReference type="NCBI Taxonomy" id="284591"/>
    <lineage>
        <taxon>Eukaryota</taxon>
        <taxon>Fungi</taxon>
        <taxon>Dikarya</taxon>
        <taxon>Ascomycota</taxon>
        <taxon>Saccharomycotina</taxon>
        <taxon>Dipodascomycetes</taxon>
        <taxon>Dipodascales</taxon>
        <taxon>Dipodascales incertae sedis</taxon>
        <taxon>Yarrowia</taxon>
    </lineage>
</organism>
<protein>
    <recommendedName>
        <fullName>SWR1-complex protein 4</fullName>
    </recommendedName>
</protein>
<name>SWC4_YARLI</name>
<proteinExistence type="inferred from homology"/>
<reference key="1">
    <citation type="journal article" date="2004" name="Nature">
        <title>Genome evolution in yeasts.</title>
        <authorList>
            <person name="Dujon B."/>
            <person name="Sherman D."/>
            <person name="Fischer G."/>
            <person name="Durrens P."/>
            <person name="Casaregola S."/>
            <person name="Lafontaine I."/>
            <person name="de Montigny J."/>
            <person name="Marck C."/>
            <person name="Neuveglise C."/>
            <person name="Talla E."/>
            <person name="Goffard N."/>
            <person name="Frangeul L."/>
            <person name="Aigle M."/>
            <person name="Anthouard V."/>
            <person name="Babour A."/>
            <person name="Barbe V."/>
            <person name="Barnay S."/>
            <person name="Blanchin S."/>
            <person name="Beckerich J.-M."/>
            <person name="Beyne E."/>
            <person name="Bleykasten C."/>
            <person name="Boisrame A."/>
            <person name="Boyer J."/>
            <person name="Cattolico L."/>
            <person name="Confanioleri F."/>
            <person name="de Daruvar A."/>
            <person name="Despons L."/>
            <person name="Fabre E."/>
            <person name="Fairhead C."/>
            <person name="Ferry-Dumazet H."/>
            <person name="Groppi A."/>
            <person name="Hantraye F."/>
            <person name="Hennequin C."/>
            <person name="Jauniaux N."/>
            <person name="Joyet P."/>
            <person name="Kachouri R."/>
            <person name="Kerrest A."/>
            <person name="Koszul R."/>
            <person name="Lemaire M."/>
            <person name="Lesur I."/>
            <person name="Ma L."/>
            <person name="Muller H."/>
            <person name="Nicaud J.-M."/>
            <person name="Nikolski M."/>
            <person name="Oztas S."/>
            <person name="Ozier-Kalogeropoulos O."/>
            <person name="Pellenz S."/>
            <person name="Potier S."/>
            <person name="Richard G.-F."/>
            <person name="Straub M.-L."/>
            <person name="Suleau A."/>
            <person name="Swennen D."/>
            <person name="Tekaia F."/>
            <person name="Wesolowski-Louvel M."/>
            <person name="Westhof E."/>
            <person name="Wirth B."/>
            <person name="Zeniou-Meyer M."/>
            <person name="Zivanovic Y."/>
            <person name="Bolotin-Fukuhara M."/>
            <person name="Thierry A."/>
            <person name="Bouchier C."/>
            <person name="Caudron B."/>
            <person name="Scarpelli C."/>
            <person name="Gaillardin C."/>
            <person name="Weissenbach J."/>
            <person name="Wincker P."/>
            <person name="Souciet J.-L."/>
        </authorList>
    </citation>
    <scope>NUCLEOTIDE SEQUENCE [LARGE SCALE GENOMIC DNA]</scope>
    <source>
        <strain>CLIB 122 / E 150</strain>
    </source>
</reference>
<dbReference type="EMBL" id="CR382130">
    <property type="protein sequence ID" value="CAG80824.1"/>
    <property type="molecule type" value="Genomic_DNA"/>
</dbReference>
<dbReference type="RefSeq" id="XP_502636.1">
    <property type="nucleotide sequence ID" value="XM_502636.1"/>
</dbReference>
<dbReference type="SMR" id="Q6C9M6"/>
<dbReference type="FunCoup" id="Q6C9M6">
    <property type="interactions" value="984"/>
</dbReference>
<dbReference type="STRING" id="284591.Q6C9M6"/>
<dbReference type="EnsemblFungi" id="CAG80824">
    <property type="protein sequence ID" value="CAG80824"/>
    <property type="gene ID" value="YALI0_D09911g"/>
</dbReference>
<dbReference type="KEGG" id="yli:2910927"/>
<dbReference type="VEuPathDB" id="FungiDB:YALI0_D09911g"/>
<dbReference type="HOGENOM" id="CLU_018539_3_1_1"/>
<dbReference type="InParanoid" id="Q6C9M6"/>
<dbReference type="OMA" id="GNTTMYQ"/>
<dbReference type="OrthoDB" id="117902at4891"/>
<dbReference type="Proteomes" id="UP000001300">
    <property type="component" value="Chromosome D"/>
</dbReference>
<dbReference type="GO" id="GO:0035267">
    <property type="term" value="C:NuA4 histone acetyltransferase complex"/>
    <property type="evidence" value="ECO:0000318"/>
    <property type="project" value="GO_Central"/>
</dbReference>
<dbReference type="GO" id="GO:0000812">
    <property type="term" value="C:Swr1 complex"/>
    <property type="evidence" value="ECO:0000318"/>
    <property type="project" value="GO_Central"/>
</dbReference>
<dbReference type="GO" id="GO:0003714">
    <property type="term" value="F:transcription corepressor activity"/>
    <property type="evidence" value="ECO:0000318"/>
    <property type="project" value="GO_Central"/>
</dbReference>
<dbReference type="GO" id="GO:0006338">
    <property type="term" value="P:chromatin remodeling"/>
    <property type="evidence" value="ECO:0007669"/>
    <property type="project" value="InterPro"/>
</dbReference>
<dbReference type="GO" id="GO:0006281">
    <property type="term" value="P:DNA repair"/>
    <property type="evidence" value="ECO:0007669"/>
    <property type="project" value="UniProtKB-KW"/>
</dbReference>
<dbReference type="GO" id="GO:0000122">
    <property type="term" value="P:negative regulation of transcription by RNA polymerase II"/>
    <property type="evidence" value="ECO:0000318"/>
    <property type="project" value="GO_Central"/>
</dbReference>
<dbReference type="Gene3D" id="1.10.10.60">
    <property type="entry name" value="Homeodomain-like"/>
    <property type="match status" value="1"/>
</dbReference>
<dbReference type="InterPro" id="IPR032563">
    <property type="entry name" value="DAMP1_SANT-like"/>
</dbReference>
<dbReference type="InterPro" id="IPR008468">
    <property type="entry name" value="DMAP1"/>
</dbReference>
<dbReference type="InterPro" id="IPR027109">
    <property type="entry name" value="Swc4/Dmap1"/>
</dbReference>
<dbReference type="PANTHER" id="PTHR12855:SF10">
    <property type="entry name" value="DNA METHYLTRANSFERASE 1-ASSOCIATED PROTEIN 1"/>
    <property type="match status" value="1"/>
</dbReference>
<dbReference type="PANTHER" id="PTHR12855">
    <property type="entry name" value="DNA METHYLTRANSFERASE 1-ASSOCIATED PROTEIN 1 FAMILY MEMBER"/>
    <property type="match status" value="1"/>
</dbReference>
<dbReference type="Pfam" id="PF05499">
    <property type="entry name" value="DMAP1"/>
    <property type="match status" value="1"/>
</dbReference>
<dbReference type="Pfam" id="PF16282">
    <property type="entry name" value="SANT_DAMP1_like"/>
    <property type="match status" value="1"/>
</dbReference>
<sequence>MASSSDVRDVLDLPDLEPNDKLTQQPKRQKLAAPVGGKRMDGMQRELFALMGENTPSVSVTKDSHTSLFKDKPQWQAKLTPWMWTPFQNQAREDGLILSHWVRGGELTQGDQYPFAALNTQISFPELTQEDYDGLKLATPGWTLEETRYLMHLCSEFDLRWPVIHDRWEWQTDQDVTMATGETKGAEGTESKVKEEDKDVEMADVKEEKENKDESNKEKSEKKESAPPDGTARTVEDLKERFYNVVSAMSKHPEKYTAEGYNMTTVKFPRDMEIKRKQYLERLLARSPAEIAEEEALILKSRKLELSATKMLQERQELLKLLDAPQPTSSVAQFQTSQGLAHLTSTLNDKSKKGGKPTKEGSVGPQAPDRGGSVEKTTKKEDTKEAKKATKEDKKAATTIAAAISKKLTTKEEAAYGISYHDKLTPGVYLRSSKVTTFKPTIQTKIVAALQDIGIPPKPVMPTAKVCAKFESIQHSMSVLLETKRAADKLETEIRLLRGQKGQL</sequence>
<evidence type="ECO:0000250" key="1"/>
<evidence type="ECO:0000256" key="2">
    <source>
        <dbReference type="SAM" id="MobiDB-lite"/>
    </source>
</evidence>
<evidence type="ECO:0000305" key="3"/>
<feature type="chain" id="PRO_0000076346" description="SWR1-complex protein 4">
    <location>
        <begin position="1"/>
        <end position="504"/>
    </location>
</feature>
<feature type="region of interest" description="Disordered" evidence="2">
    <location>
        <begin position="1"/>
        <end position="36"/>
    </location>
</feature>
<feature type="region of interest" description="Disordered" evidence="2">
    <location>
        <begin position="181"/>
        <end position="235"/>
    </location>
</feature>
<feature type="region of interest" description="Disordered" evidence="2">
    <location>
        <begin position="346"/>
        <end position="391"/>
    </location>
</feature>
<feature type="compositionally biased region" description="Basic and acidic residues" evidence="2">
    <location>
        <begin position="1"/>
        <end position="11"/>
    </location>
</feature>
<feature type="compositionally biased region" description="Basic and acidic residues" evidence="2">
    <location>
        <begin position="184"/>
        <end position="226"/>
    </location>
</feature>
<feature type="compositionally biased region" description="Basic and acidic residues" evidence="2">
    <location>
        <begin position="372"/>
        <end position="391"/>
    </location>
</feature>
<comment type="function">
    <text evidence="1">Component of the SWR1 complex which mediates the ATP-dependent exchange of histone H2A for the H2A variant HZT1 leading to transcriptional regulation of selected genes by chromatin remodeling. Component of the NuA4 histone acetyltransferase complex which is involved in transcriptional activation of selected genes principally by acetylation of nucleosomal histone H4 and H2A. The NuA4 complex is also involved in DNA repair (By similarity).</text>
</comment>
<comment type="subunit">
    <text evidence="1">Component of the SWR1 chromatin-remodeling complex and of the NuA4 histone acetyltransferase complex.</text>
</comment>
<comment type="subcellular location">
    <subcellularLocation>
        <location evidence="1">Nucleus</location>
    </subcellularLocation>
</comment>
<comment type="similarity">
    <text evidence="3">Belongs to the SWC4 family.</text>
</comment>
<keyword id="KW-0010">Activator</keyword>
<keyword id="KW-0156">Chromatin regulator</keyword>
<keyword id="KW-0227">DNA damage</keyword>
<keyword id="KW-0234">DNA repair</keyword>
<keyword id="KW-0539">Nucleus</keyword>
<keyword id="KW-1185">Reference proteome</keyword>
<keyword id="KW-0804">Transcription</keyword>
<keyword id="KW-0805">Transcription regulation</keyword>